<protein>
    <recommendedName>
        <fullName evidence="1">Probable GTP-binding protein EngB</fullName>
    </recommendedName>
</protein>
<proteinExistence type="inferred from homology"/>
<evidence type="ECO:0000255" key="1">
    <source>
        <dbReference type="HAMAP-Rule" id="MF_00321"/>
    </source>
</evidence>
<gene>
    <name evidence="1" type="primary">engB</name>
    <name type="ordered locus">HAPS_2196</name>
</gene>
<organism>
    <name type="scientific">Glaesserella parasuis serovar 5 (strain SH0165)</name>
    <name type="common">Haemophilus parasuis</name>
    <dbReference type="NCBI Taxonomy" id="557723"/>
    <lineage>
        <taxon>Bacteria</taxon>
        <taxon>Pseudomonadati</taxon>
        <taxon>Pseudomonadota</taxon>
        <taxon>Gammaproteobacteria</taxon>
        <taxon>Pasteurellales</taxon>
        <taxon>Pasteurellaceae</taxon>
        <taxon>Glaesserella</taxon>
    </lineage>
</organism>
<name>ENGB_GLAP5</name>
<sequence length="209" mass="23462">MTEIKLNYHKTHFLTSAPDIRHLPEDSGVEIAFAGRSNAGKSTALNALTNQKNLARTSKTPGRTQLINLFEVEPNCKLVDLPGYGYAAVPEQVKLQWQRSLGEYLQKRECLRGVVILMDIRHPLKDLDQQMIEWAVSAELPVLLLLTKADKLSQSARSKTVKMVREAILPFQGDVQVEAYSALNRIGIDKLATKLDSWFAEIFTQTQEG</sequence>
<comment type="function">
    <text evidence="1">Necessary for normal cell division and for the maintenance of normal septation.</text>
</comment>
<comment type="cofactor">
    <cofactor evidence="1">
        <name>Mg(2+)</name>
        <dbReference type="ChEBI" id="CHEBI:18420"/>
    </cofactor>
</comment>
<comment type="similarity">
    <text evidence="1">Belongs to the TRAFAC class TrmE-Era-EngA-EngB-Septin-like GTPase superfamily. EngB GTPase family.</text>
</comment>
<keyword id="KW-0131">Cell cycle</keyword>
<keyword id="KW-0132">Cell division</keyword>
<keyword id="KW-0342">GTP-binding</keyword>
<keyword id="KW-0460">Magnesium</keyword>
<keyword id="KW-0479">Metal-binding</keyword>
<keyword id="KW-0547">Nucleotide-binding</keyword>
<keyword id="KW-1185">Reference proteome</keyword>
<keyword id="KW-0717">Septation</keyword>
<reference key="1">
    <citation type="journal article" date="2009" name="J. Bacteriol.">
        <title>Complete genome sequence of Haemophilus parasuis SH0165.</title>
        <authorList>
            <person name="Yue M."/>
            <person name="Yang F."/>
            <person name="Yang J."/>
            <person name="Bei W."/>
            <person name="Cai X."/>
            <person name="Chen L."/>
            <person name="Dong J."/>
            <person name="Zhou R."/>
            <person name="Jin M."/>
            <person name="Jin Q."/>
            <person name="Chen H."/>
        </authorList>
    </citation>
    <scope>NUCLEOTIDE SEQUENCE [LARGE SCALE GENOMIC DNA]</scope>
    <source>
        <strain>SH0165</strain>
    </source>
</reference>
<feature type="chain" id="PRO_1000189923" description="Probable GTP-binding protein EngB">
    <location>
        <begin position="1"/>
        <end position="209"/>
    </location>
</feature>
<feature type="domain" description="EngB-type G" evidence="1">
    <location>
        <begin position="27"/>
        <end position="201"/>
    </location>
</feature>
<feature type="binding site" evidence="1">
    <location>
        <begin position="35"/>
        <end position="42"/>
    </location>
    <ligand>
        <name>GTP</name>
        <dbReference type="ChEBI" id="CHEBI:37565"/>
    </ligand>
</feature>
<feature type="binding site" evidence="1">
    <location>
        <position position="42"/>
    </location>
    <ligand>
        <name>Mg(2+)</name>
        <dbReference type="ChEBI" id="CHEBI:18420"/>
    </ligand>
</feature>
<feature type="binding site" evidence="1">
    <location>
        <begin position="62"/>
        <end position="66"/>
    </location>
    <ligand>
        <name>GTP</name>
        <dbReference type="ChEBI" id="CHEBI:37565"/>
    </ligand>
</feature>
<feature type="binding site" evidence="1">
    <location>
        <position position="64"/>
    </location>
    <ligand>
        <name>Mg(2+)</name>
        <dbReference type="ChEBI" id="CHEBI:18420"/>
    </ligand>
</feature>
<feature type="binding site" evidence="1">
    <location>
        <begin position="80"/>
        <end position="83"/>
    </location>
    <ligand>
        <name>GTP</name>
        <dbReference type="ChEBI" id="CHEBI:37565"/>
    </ligand>
</feature>
<feature type="binding site" evidence="1">
    <location>
        <begin position="147"/>
        <end position="150"/>
    </location>
    <ligand>
        <name>GTP</name>
        <dbReference type="ChEBI" id="CHEBI:37565"/>
    </ligand>
</feature>
<feature type="binding site" evidence="1">
    <location>
        <begin position="180"/>
        <end position="182"/>
    </location>
    <ligand>
        <name>GTP</name>
        <dbReference type="ChEBI" id="CHEBI:37565"/>
    </ligand>
</feature>
<accession>B8F8H7</accession>
<dbReference type="EMBL" id="CP001321">
    <property type="protein sequence ID" value="ACL33629.1"/>
    <property type="molecule type" value="Genomic_DNA"/>
</dbReference>
<dbReference type="SMR" id="B8F8H7"/>
<dbReference type="STRING" id="557723.HAPS_2196"/>
<dbReference type="KEGG" id="hap:HAPS_2196"/>
<dbReference type="HOGENOM" id="CLU_033732_1_0_6"/>
<dbReference type="Proteomes" id="UP000006743">
    <property type="component" value="Chromosome"/>
</dbReference>
<dbReference type="GO" id="GO:0005829">
    <property type="term" value="C:cytosol"/>
    <property type="evidence" value="ECO:0007669"/>
    <property type="project" value="TreeGrafter"/>
</dbReference>
<dbReference type="GO" id="GO:0005525">
    <property type="term" value="F:GTP binding"/>
    <property type="evidence" value="ECO:0007669"/>
    <property type="project" value="UniProtKB-UniRule"/>
</dbReference>
<dbReference type="GO" id="GO:0046872">
    <property type="term" value="F:metal ion binding"/>
    <property type="evidence" value="ECO:0007669"/>
    <property type="project" value="UniProtKB-KW"/>
</dbReference>
<dbReference type="GO" id="GO:0000917">
    <property type="term" value="P:division septum assembly"/>
    <property type="evidence" value="ECO:0007669"/>
    <property type="project" value="UniProtKB-KW"/>
</dbReference>
<dbReference type="CDD" id="cd01876">
    <property type="entry name" value="YihA_EngB"/>
    <property type="match status" value="1"/>
</dbReference>
<dbReference type="FunFam" id="3.40.50.300:FF:000098">
    <property type="entry name" value="Probable GTP-binding protein EngB"/>
    <property type="match status" value="1"/>
</dbReference>
<dbReference type="Gene3D" id="3.40.50.300">
    <property type="entry name" value="P-loop containing nucleotide triphosphate hydrolases"/>
    <property type="match status" value="1"/>
</dbReference>
<dbReference type="HAMAP" id="MF_00321">
    <property type="entry name" value="GTPase_EngB"/>
    <property type="match status" value="1"/>
</dbReference>
<dbReference type="InterPro" id="IPR030393">
    <property type="entry name" value="G_ENGB_dom"/>
</dbReference>
<dbReference type="InterPro" id="IPR006073">
    <property type="entry name" value="GTP-bd"/>
</dbReference>
<dbReference type="InterPro" id="IPR019987">
    <property type="entry name" value="GTP-bd_ribosome_bio_YsxC"/>
</dbReference>
<dbReference type="InterPro" id="IPR027417">
    <property type="entry name" value="P-loop_NTPase"/>
</dbReference>
<dbReference type="NCBIfam" id="TIGR03598">
    <property type="entry name" value="GTPase_YsxC"/>
    <property type="match status" value="1"/>
</dbReference>
<dbReference type="PANTHER" id="PTHR11649:SF13">
    <property type="entry name" value="ENGB-TYPE G DOMAIN-CONTAINING PROTEIN"/>
    <property type="match status" value="1"/>
</dbReference>
<dbReference type="PANTHER" id="PTHR11649">
    <property type="entry name" value="MSS1/TRME-RELATED GTP-BINDING PROTEIN"/>
    <property type="match status" value="1"/>
</dbReference>
<dbReference type="Pfam" id="PF01926">
    <property type="entry name" value="MMR_HSR1"/>
    <property type="match status" value="1"/>
</dbReference>
<dbReference type="SUPFAM" id="SSF52540">
    <property type="entry name" value="P-loop containing nucleoside triphosphate hydrolases"/>
    <property type="match status" value="1"/>
</dbReference>
<dbReference type="PROSITE" id="PS51706">
    <property type="entry name" value="G_ENGB"/>
    <property type="match status" value="1"/>
</dbReference>